<proteinExistence type="inferred from homology"/>
<protein>
    <recommendedName>
        <fullName evidence="1">DNA mismatch repair protein MutH</fullName>
    </recommendedName>
    <alternativeName>
        <fullName evidence="1">Methyl-directed mismatch repair protein</fullName>
    </alternativeName>
</protein>
<name>MUTH_VIBVY</name>
<evidence type="ECO:0000255" key="1">
    <source>
        <dbReference type="HAMAP-Rule" id="MF_00759"/>
    </source>
</evidence>
<evidence type="ECO:0000305" key="2"/>
<sequence length="227" mass="25474">MKPIPQTEAELLQRANQIAGCSFAELAEEANMDVPLDLKRDKGWVGQLLEWHLGAPAGSKPQQDFSELGIELKSIPVSYSGKPLETTFVCVAPLTGVHGLTWETSHVRNKLSRVLWIPVEGEREIPLAERHVGTPLLWSPNDEEEILLKNDWEELMEMIVFGQFDQISARHGVALHLRPKAANSKALTEAYNINGKPIKTLPRGFYLRTQFTAQILQNAFNSLLNEE</sequence>
<reference key="1">
    <citation type="journal article" date="2003" name="Genome Res.">
        <title>Comparative genome analysis of Vibrio vulnificus, a marine pathogen.</title>
        <authorList>
            <person name="Chen C.-Y."/>
            <person name="Wu K.-M."/>
            <person name="Chang Y.-C."/>
            <person name="Chang C.-H."/>
            <person name="Tsai H.-C."/>
            <person name="Liao T.-L."/>
            <person name="Liu Y.-M."/>
            <person name="Chen H.-J."/>
            <person name="Shen A.B.-T."/>
            <person name="Li J.-C."/>
            <person name="Su T.-L."/>
            <person name="Shao C.-P."/>
            <person name="Lee C.-T."/>
            <person name="Hor L.-I."/>
            <person name="Tsai S.-F."/>
        </authorList>
    </citation>
    <scope>NUCLEOTIDE SEQUENCE [LARGE SCALE GENOMIC DNA]</scope>
    <source>
        <strain>YJ016</strain>
    </source>
</reference>
<comment type="function">
    <text evidence="1">Sequence-specific endonuclease that cleaves unmethylated GATC sequences. It is involved in DNA mismatch repair.</text>
</comment>
<comment type="subcellular location">
    <subcellularLocation>
        <location evidence="1">Cytoplasm</location>
    </subcellularLocation>
</comment>
<comment type="similarity">
    <text evidence="1">Belongs to the MutH family.</text>
</comment>
<comment type="sequence caution" evidence="2">
    <conflict type="erroneous initiation">
        <sequence resource="EMBL-CDS" id="BAC93438"/>
    </conflict>
</comment>
<dbReference type="EMBL" id="BA000037">
    <property type="protein sequence ID" value="BAC93438.1"/>
    <property type="status" value="ALT_INIT"/>
    <property type="molecule type" value="Genomic_DNA"/>
</dbReference>
<dbReference type="RefSeq" id="WP_011078609.1">
    <property type="nucleotide sequence ID" value="NC_005139.1"/>
</dbReference>
<dbReference type="SMR" id="Q7MNP1"/>
<dbReference type="STRING" id="672.VV93_v1c06140"/>
<dbReference type="KEGG" id="vvy:VV0674"/>
<dbReference type="eggNOG" id="COG3066">
    <property type="taxonomic scope" value="Bacteria"/>
</dbReference>
<dbReference type="HOGENOM" id="CLU_086669_0_0_6"/>
<dbReference type="Proteomes" id="UP000002675">
    <property type="component" value="Chromosome I"/>
</dbReference>
<dbReference type="GO" id="GO:0005737">
    <property type="term" value="C:cytoplasm"/>
    <property type="evidence" value="ECO:0007669"/>
    <property type="project" value="UniProtKB-SubCell"/>
</dbReference>
<dbReference type="GO" id="GO:0003677">
    <property type="term" value="F:DNA binding"/>
    <property type="evidence" value="ECO:0007669"/>
    <property type="project" value="InterPro"/>
</dbReference>
<dbReference type="GO" id="GO:0004519">
    <property type="term" value="F:endonuclease activity"/>
    <property type="evidence" value="ECO:0007669"/>
    <property type="project" value="UniProtKB-UniRule"/>
</dbReference>
<dbReference type="GO" id="GO:0006304">
    <property type="term" value="P:DNA modification"/>
    <property type="evidence" value="ECO:0007669"/>
    <property type="project" value="InterPro"/>
</dbReference>
<dbReference type="GO" id="GO:0006298">
    <property type="term" value="P:mismatch repair"/>
    <property type="evidence" value="ECO:0007669"/>
    <property type="project" value="UniProtKB-UniRule"/>
</dbReference>
<dbReference type="CDD" id="cd00583">
    <property type="entry name" value="MutH-like"/>
    <property type="match status" value="1"/>
</dbReference>
<dbReference type="Gene3D" id="3.40.600.10">
    <property type="entry name" value="DNA mismatch repair MutH/Restriction endonuclease, type II"/>
    <property type="match status" value="1"/>
</dbReference>
<dbReference type="HAMAP" id="MF_00759">
    <property type="entry name" value="MutH"/>
    <property type="match status" value="1"/>
</dbReference>
<dbReference type="InterPro" id="IPR004230">
    <property type="entry name" value="DNA_mismatch_repair_MutH"/>
</dbReference>
<dbReference type="InterPro" id="IPR011337">
    <property type="entry name" value="DNA_rep_MutH/RE_typeII_Sau3AI"/>
</dbReference>
<dbReference type="InterPro" id="IPR037057">
    <property type="entry name" value="DNA_rep_MutH/T2_RE_sf"/>
</dbReference>
<dbReference type="InterPro" id="IPR011335">
    <property type="entry name" value="Restrct_endonuc-II-like"/>
</dbReference>
<dbReference type="NCBIfam" id="TIGR02248">
    <property type="entry name" value="mutH_TIGR"/>
    <property type="match status" value="1"/>
</dbReference>
<dbReference type="NCBIfam" id="NF003458">
    <property type="entry name" value="PRK05070.1"/>
    <property type="match status" value="1"/>
</dbReference>
<dbReference type="Pfam" id="PF02976">
    <property type="entry name" value="MutH"/>
    <property type="match status" value="1"/>
</dbReference>
<dbReference type="SMART" id="SM00927">
    <property type="entry name" value="MutH"/>
    <property type="match status" value="1"/>
</dbReference>
<dbReference type="SUPFAM" id="SSF52980">
    <property type="entry name" value="Restriction endonuclease-like"/>
    <property type="match status" value="1"/>
</dbReference>
<keyword id="KW-0963">Cytoplasm</keyword>
<keyword id="KW-0227">DNA damage</keyword>
<keyword id="KW-0234">DNA repair</keyword>
<keyword id="KW-0255">Endonuclease</keyword>
<keyword id="KW-0378">Hydrolase</keyword>
<keyword id="KW-0540">Nuclease</keyword>
<organism>
    <name type="scientific">Vibrio vulnificus (strain YJ016)</name>
    <dbReference type="NCBI Taxonomy" id="196600"/>
    <lineage>
        <taxon>Bacteria</taxon>
        <taxon>Pseudomonadati</taxon>
        <taxon>Pseudomonadota</taxon>
        <taxon>Gammaproteobacteria</taxon>
        <taxon>Vibrionales</taxon>
        <taxon>Vibrionaceae</taxon>
        <taxon>Vibrio</taxon>
    </lineage>
</organism>
<feature type="chain" id="PRO_0000198679" description="DNA mismatch repair protein MutH">
    <location>
        <begin position="1"/>
        <end position="227"/>
    </location>
</feature>
<accession>Q7MNP1</accession>
<gene>
    <name evidence="1" type="primary">mutH</name>
    <name type="ordered locus">VV0674</name>
</gene>